<organism>
    <name type="scientific">Ligilactobacillus salivarius (strain UCC118)</name>
    <name type="common">Lactobacillus salivarius</name>
    <dbReference type="NCBI Taxonomy" id="362948"/>
    <lineage>
        <taxon>Bacteria</taxon>
        <taxon>Bacillati</taxon>
        <taxon>Bacillota</taxon>
        <taxon>Bacilli</taxon>
        <taxon>Lactobacillales</taxon>
        <taxon>Lactobacillaceae</taxon>
        <taxon>Ligilactobacillus</taxon>
    </lineage>
</organism>
<feature type="chain" id="PRO_0000256922" description="Chaperonin GroEL">
    <location>
        <begin position="1"/>
        <end position="540"/>
    </location>
</feature>
<feature type="region of interest" description="Disordered" evidence="2">
    <location>
        <begin position="520"/>
        <end position="540"/>
    </location>
</feature>
<feature type="binding site" evidence="1">
    <location>
        <begin position="29"/>
        <end position="32"/>
    </location>
    <ligand>
        <name>ATP</name>
        <dbReference type="ChEBI" id="CHEBI:30616"/>
    </ligand>
</feature>
<feature type="binding site" evidence="1">
    <location>
        <begin position="86"/>
        <end position="90"/>
    </location>
    <ligand>
        <name>ATP</name>
        <dbReference type="ChEBI" id="CHEBI:30616"/>
    </ligand>
</feature>
<feature type="binding site" evidence="1">
    <location>
        <position position="413"/>
    </location>
    <ligand>
        <name>ATP</name>
        <dbReference type="ChEBI" id="CHEBI:30616"/>
    </ligand>
</feature>
<feature type="binding site" evidence="1">
    <location>
        <begin position="476"/>
        <end position="478"/>
    </location>
    <ligand>
        <name>ATP</name>
        <dbReference type="ChEBI" id="CHEBI:30616"/>
    </ligand>
</feature>
<feature type="binding site" evidence="1">
    <location>
        <position position="492"/>
    </location>
    <ligand>
        <name>ATP</name>
        <dbReference type="ChEBI" id="CHEBI:30616"/>
    </ligand>
</feature>
<protein>
    <recommendedName>
        <fullName evidence="1">Chaperonin GroEL</fullName>
        <ecNumber evidence="1">5.6.1.7</ecNumber>
    </recommendedName>
    <alternativeName>
        <fullName evidence="1">60 kDa chaperonin</fullName>
    </alternativeName>
    <alternativeName>
        <fullName evidence="1">Chaperonin-60</fullName>
        <shortName evidence="1">Cpn60</shortName>
    </alternativeName>
</protein>
<gene>
    <name evidence="1" type="primary">groEL</name>
    <name evidence="1" type="synonym">groL</name>
    <name type="ordered locus">LSL_1211</name>
</gene>
<proteinExistence type="inferred from homology"/>
<name>CH60_LIGS1</name>
<keyword id="KW-0067">ATP-binding</keyword>
<keyword id="KW-0143">Chaperone</keyword>
<keyword id="KW-0963">Cytoplasm</keyword>
<keyword id="KW-0413">Isomerase</keyword>
<keyword id="KW-0547">Nucleotide-binding</keyword>
<keyword id="KW-1185">Reference proteome</keyword>
<accession>Q1WSW0</accession>
<evidence type="ECO:0000255" key="1">
    <source>
        <dbReference type="HAMAP-Rule" id="MF_00600"/>
    </source>
</evidence>
<evidence type="ECO:0000256" key="2">
    <source>
        <dbReference type="SAM" id="MobiDB-lite"/>
    </source>
</evidence>
<dbReference type="EC" id="5.6.1.7" evidence="1"/>
<dbReference type="EMBL" id="CP000233">
    <property type="protein sequence ID" value="ABE00019.1"/>
    <property type="molecule type" value="Genomic_DNA"/>
</dbReference>
<dbReference type="RefSeq" id="WP_011476222.1">
    <property type="nucleotide sequence ID" value="NC_007929.1"/>
</dbReference>
<dbReference type="RefSeq" id="YP_536102.1">
    <property type="nucleotide sequence ID" value="NC_007929.1"/>
</dbReference>
<dbReference type="SMR" id="Q1WSW0"/>
<dbReference type="STRING" id="362948.LSL_1211"/>
<dbReference type="KEGG" id="lsl:LSL_1211"/>
<dbReference type="PATRIC" id="fig|362948.14.peg.1285"/>
<dbReference type="HOGENOM" id="CLU_016503_3_0_9"/>
<dbReference type="OrthoDB" id="9766614at2"/>
<dbReference type="Proteomes" id="UP000006559">
    <property type="component" value="Chromosome"/>
</dbReference>
<dbReference type="GO" id="GO:0005737">
    <property type="term" value="C:cytoplasm"/>
    <property type="evidence" value="ECO:0007669"/>
    <property type="project" value="UniProtKB-SubCell"/>
</dbReference>
<dbReference type="GO" id="GO:0005524">
    <property type="term" value="F:ATP binding"/>
    <property type="evidence" value="ECO:0007669"/>
    <property type="project" value="UniProtKB-UniRule"/>
</dbReference>
<dbReference type="GO" id="GO:0140662">
    <property type="term" value="F:ATP-dependent protein folding chaperone"/>
    <property type="evidence" value="ECO:0007669"/>
    <property type="project" value="InterPro"/>
</dbReference>
<dbReference type="GO" id="GO:0016853">
    <property type="term" value="F:isomerase activity"/>
    <property type="evidence" value="ECO:0007669"/>
    <property type="project" value="UniProtKB-KW"/>
</dbReference>
<dbReference type="GO" id="GO:0051082">
    <property type="term" value="F:unfolded protein binding"/>
    <property type="evidence" value="ECO:0007669"/>
    <property type="project" value="UniProtKB-UniRule"/>
</dbReference>
<dbReference type="GO" id="GO:0042026">
    <property type="term" value="P:protein refolding"/>
    <property type="evidence" value="ECO:0007669"/>
    <property type="project" value="UniProtKB-UniRule"/>
</dbReference>
<dbReference type="CDD" id="cd03344">
    <property type="entry name" value="GroEL"/>
    <property type="match status" value="1"/>
</dbReference>
<dbReference type="FunFam" id="3.50.7.10:FF:000001">
    <property type="entry name" value="60 kDa chaperonin"/>
    <property type="match status" value="1"/>
</dbReference>
<dbReference type="Gene3D" id="3.50.7.10">
    <property type="entry name" value="GroEL"/>
    <property type="match status" value="1"/>
</dbReference>
<dbReference type="Gene3D" id="1.10.560.10">
    <property type="entry name" value="GroEL-like equatorial domain"/>
    <property type="match status" value="1"/>
</dbReference>
<dbReference type="Gene3D" id="3.30.260.10">
    <property type="entry name" value="TCP-1-like chaperonin intermediate domain"/>
    <property type="match status" value="1"/>
</dbReference>
<dbReference type="HAMAP" id="MF_00600">
    <property type="entry name" value="CH60"/>
    <property type="match status" value="1"/>
</dbReference>
<dbReference type="InterPro" id="IPR018370">
    <property type="entry name" value="Chaperonin_Cpn60_CS"/>
</dbReference>
<dbReference type="InterPro" id="IPR001844">
    <property type="entry name" value="Cpn60/GroEL"/>
</dbReference>
<dbReference type="InterPro" id="IPR002423">
    <property type="entry name" value="Cpn60/GroEL/TCP-1"/>
</dbReference>
<dbReference type="InterPro" id="IPR027409">
    <property type="entry name" value="GroEL-like_apical_dom_sf"/>
</dbReference>
<dbReference type="InterPro" id="IPR027413">
    <property type="entry name" value="GROEL-like_equatorial_sf"/>
</dbReference>
<dbReference type="InterPro" id="IPR027410">
    <property type="entry name" value="TCP-1-like_intermed_sf"/>
</dbReference>
<dbReference type="NCBIfam" id="TIGR02348">
    <property type="entry name" value="GroEL"/>
    <property type="match status" value="1"/>
</dbReference>
<dbReference type="NCBIfam" id="NF000592">
    <property type="entry name" value="PRK00013.1"/>
    <property type="match status" value="1"/>
</dbReference>
<dbReference type="NCBIfam" id="NF009487">
    <property type="entry name" value="PRK12849.1"/>
    <property type="match status" value="1"/>
</dbReference>
<dbReference type="NCBIfam" id="NF009488">
    <property type="entry name" value="PRK12850.1"/>
    <property type="match status" value="1"/>
</dbReference>
<dbReference type="NCBIfam" id="NF009489">
    <property type="entry name" value="PRK12851.1"/>
    <property type="match status" value="1"/>
</dbReference>
<dbReference type="PANTHER" id="PTHR45633">
    <property type="entry name" value="60 KDA HEAT SHOCK PROTEIN, MITOCHONDRIAL"/>
    <property type="match status" value="1"/>
</dbReference>
<dbReference type="Pfam" id="PF00118">
    <property type="entry name" value="Cpn60_TCP1"/>
    <property type="match status" value="1"/>
</dbReference>
<dbReference type="PRINTS" id="PR00298">
    <property type="entry name" value="CHAPERONIN60"/>
</dbReference>
<dbReference type="SUPFAM" id="SSF52029">
    <property type="entry name" value="GroEL apical domain-like"/>
    <property type="match status" value="1"/>
</dbReference>
<dbReference type="SUPFAM" id="SSF48592">
    <property type="entry name" value="GroEL equatorial domain-like"/>
    <property type="match status" value="2"/>
</dbReference>
<dbReference type="PROSITE" id="PS00296">
    <property type="entry name" value="CHAPERONINS_CPN60"/>
    <property type="match status" value="1"/>
</dbReference>
<sequence length="540" mass="57352">MAKEIKFSEDARSKMLKGVDKLANTVKSTIGPKGRNVVLEQSYGSPTITNDGVTIAKATDLEDHFENMGAKLVSEVASKTNDIAGDGTTTATVLTQAIVNEGMKNVTAGANPVGIRRGIELATKAAVDALHEMSHTVESKSDIAQVASISSANEEVGKLIADAMEKVGNDGVITIEESKGIDTSLDVVEGMQFDRGYLSQYMVTDNDKMEADLDNPYILLTDKKISNIQEVLPLLQSIVQQGRPLLIIADDVDGEALPTLVLNKIRGTFNVVAVKAPGFGDRRKAMLQDIATLTGATVITDDLGLQLKDTTVEQLGSAGKVTVTKENTTIVEGAGDKDKIAERVEQIKKQISETTSDFDREKLQERLAKLSGGVAVIKVGAATETELKERKYRIEDALNATRAAVEEGFVPGGGTALVNVIGKVAALEEEGDVQTGINIVKRALEEPVRQIAENAGLEGSVIVEKLKEQKPGVGFNAATNEWVDMVEAGIVDPTKVTRSALQNAASVSALLLTTEAVVADKPEPESNNQMPATPGMGGMM</sequence>
<comment type="function">
    <text evidence="1">Together with its co-chaperonin GroES, plays an essential role in assisting protein folding. The GroEL-GroES system forms a nano-cage that allows encapsulation of the non-native substrate proteins and provides a physical environment optimized to promote and accelerate protein folding.</text>
</comment>
<comment type="catalytic activity">
    <reaction evidence="1">
        <text>ATP + H2O + a folded polypeptide = ADP + phosphate + an unfolded polypeptide.</text>
        <dbReference type="EC" id="5.6.1.7"/>
    </reaction>
</comment>
<comment type="subunit">
    <text evidence="1">Forms a cylinder of 14 subunits composed of two heptameric rings stacked back-to-back. Interacts with the co-chaperonin GroES.</text>
</comment>
<comment type="subcellular location">
    <subcellularLocation>
        <location evidence="1">Cytoplasm</location>
    </subcellularLocation>
</comment>
<comment type="similarity">
    <text evidence="1">Belongs to the chaperonin (HSP60) family.</text>
</comment>
<reference key="1">
    <citation type="journal article" date="2006" name="Proc. Natl. Acad. Sci. U.S.A.">
        <title>Multireplicon genome architecture of Lactobacillus salivarius.</title>
        <authorList>
            <person name="Claesson M.J."/>
            <person name="Li Y."/>
            <person name="Leahy S."/>
            <person name="Canchaya C."/>
            <person name="van Pijkeren J.P."/>
            <person name="Cerdeno-Tarraga A.M."/>
            <person name="Parkhill J."/>
            <person name="Flynn S."/>
            <person name="O'Sullivan G.C."/>
            <person name="Collins J.K."/>
            <person name="Higgins D."/>
            <person name="Shanahan F."/>
            <person name="Fitzgerald G.F."/>
            <person name="van Sinderen D."/>
            <person name="O'Toole P.W."/>
        </authorList>
    </citation>
    <scope>NUCLEOTIDE SEQUENCE [LARGE SCALE GENOMIC DNA]</scope>
    <source>
        <strain>UCC118</strain>
    </source>
</reference>